<evidence type="ECO:0000250" key="1">
    <source>
        <dbReference type="UniProtKB" id="P0C0W9"/>
    </source>
</evidence>
<evidence type="ECO:0000305" key="2"/>
<proteinExistence type="inferred from homology"/>
<comment type="function">
    <text evidence="1">Component of the ribosome, a large ribonucleoprotein complex responsible for the synthesis of proteins in the cell. The small ribosomal subunit (SSU) binds messenger RNAs (mRNAs) and translates the encoded message by selecting cognate aminoacyl-transfer RNA (tRNA) molecules. The large subunit (LSU) contains the ribosomal catalytic site termed the peptidyl transferase center (PTC), which catalyzes the formation of peptide bonds, thereby polymerizing the amino acids delivered by tRNAs into a polypeptide chain. The nascent polypeptides leave the ribosome through a tunnel in the LSU and interact with protein factors that function in enzymatic processing, targeting, and the membrane insertion of nascent chains at the exit of the ribosomal tunnel.</text>
</comment>
<comment type="subunit">
    <text evidence="1">Component of the large ribosomal subunit.</text>
</comment>
<comment type="subcellular location">
    <subcellularLocation>
        <location evidence="1">Nucleus</location>
    </subcellularLocation>
    <subcellularLocation>
        <location evidence="1">Cytoplasm</location>
    </subcellularLocation>
</comment>
<comment type="similarity">
    <text evidence="2">Belongs to the universal ribosomal protein uL5 family.</text>
</comment>
<protein>
    <recommendedName>
        <fullName evidence="2">Large ribosomal subunit protein uL5</fullName>
    </recommendedName>
    <alternativeName>
        <fullName>60S ribosomal protein L11</fullName>
    </alternativeName>
</protein>
<sequence>MSAKTQNVMRELKIEKLVLNISVGESGDRLTRASKVLEQLSGQTPVQSKARYTVRTFGIRRNEKIAVHVTVRGPKAEEILERGLKVKEYQLRNRNFSTTGNFGFGIQEHIDLGIKYDPSIGIFGMDFYIVMGRPGNRIARRKRCRATVGNSHKTSKEDTIAWFKQRYDADVLDK</sequence>
<keyword id="KW-0963">Cytoplasm</keyword>
<keyword id="KW-0539">Nucleus</keyword>
<keyword id="KW-1185">Reference proteome</keyword>
<keyword id="KW-0687">Ribonucleoprotein</keyword>
<keyword id="KW-0689">Ribosomal protein</keyword>
<keyword id="KW-0694">RNA-binding</keyword>
<keyword id="KW-0699">rRNA-binding</keyword>
<gene>
    <name type="primary">RPL11</name>
    <name type="ordered locus">CAGL0G01826g</name>
</gene>
<reference key="1">
    <citation type="journal article" date="2004" name="Nature">
        <title>Genome evolution in yeasts.</title>
        <authorList>
            <person name="Dujon B."/>
            <person name="Sherman D."/>
            <person name="Fischer G."/>
            <person name="Durrens P."/>
            <person name="Casaregola S."/>
            <person name="Lafontaine I."/>
            <person name="de Montigny J."/>
            <person name="Marck C."/>
            <person name="Neuveglise C."/>
            <person name="Talla E."/>
            <person name="Goffard N."/>
            <person name="Frangeul L."/>
            <person name="Aigle M."/>
            <person name="Anthouard V."/>
            <person name="Babour A."/>
            <person name="Barbe V."/>
            <person name="Barnay S."/>
            <person name="Blanchin S."/>
            <person name="Beckerich J.-M."/>
            <person name="Beyne E."/>
            <person name="Bleykasten C."/>
            <person name="Boisrame A."/>
            <person name="Boyer J."/>
            <person name="Cattolico L."/>
            <person name="Confanioleri F."/>
            <person name="de Daruvar A."/>
            <person name="Despons L."/>
            <person name="Fabre E."/>
            <person name="Fairhead C."/>
            <person name="Ferry-Dumazet H."/>
            <person name="Groppi A."/>
            <person name="Hantraye F."/>
            <person name="Hennequin C."/>
            <person name="Jauniaux N."/>
            <person name="Joyet P."/>
            <person name="Kachouri R."/>
            <person name="Kerrest A."/>
            <person name="Koszul R."/>
            <person name="Lemaire M."/>
            <person name="Lesur I."/>
            <person name="Ma L."/>
            <person name="Muller H."/>
            <person name="Nicaud J.-M."/>
            <person name="Nikolski M."/>
            <person name="Oztas S."/>
            <person name="Ozier-Kalogeropoulos O."/>
            <person name="Pellenz S."/>
            <person name="Potier S."/>
            <person name="Richard G.-F."/>
            <person name="Straub M.-L."/>
            <person name="Suleau A."/>
            <person name="Swennen D."/>
            <person name="Tekaia F."/>
            <person name="Wesolowski-Louvel M."/>
            <person name="Westhof E."/>
            <person name="Wirth B."/>
            <person name="Zeniou-Meyer M."/>
            <person name="Zivanovic Y."/>
            <person name="Bolotin-Fukuhara M."/>
            <person name="Thierry A."/>
            <person name="Bouchier C."/>
            <person name="Caudron B."/>
            <person name="Scarpelli C."/>
            <person name="Gaillardin C."/>
            <person name="Weissenbach J."/>
            <person name="Wincker P."/>
            <person name="Souciet J.-L."/>
        </authorList>
    </citation>
    <scope>NUCLEOTIDE SEQUENCE [LARGE SCALE GENOMIC DNA]</scope>
    <source>
        <strain>ATCC 2001 / BCRC 20586 / JCM 3761 / NBRC 0622 / NRRL Y-65 / CBS 138</strain>
    </source>
</reference>
<name>RL11_CANGA</name>
<dbReference type="EMBL" id="CR380953">
    <property type="protein sequence ID" value="CAG59367.1"/>
    <property type="molecule type" value="Genomic_DNA"/>
</dbReference>
<dbReference type="RefSeq" id="XP_446440.1">
    <property type="nucleotide sequence ID" value="XM_446440.1"/>
</dbReference>
<dbReference type="SMR" id="Q6FTK4"/>
<dbReference type="FunCoup" id="Q6FTK4">
    <property type="interactions" value="1124"/>
</dbReference>
<dbReference type="STRING" id="284593.Q6FTK4"/>
<dbReference type="EnsemblFungi" id="CAGL0G01826g-T">
    <property type="protein sequence ID" value="CAGL0G01826g-T-p1"/>
    <property type="gene ID" value="CAGL0G01826g"/>
</dbReference>
<dbReference type="KEGG" id="cgr:2888415"/>
<dbReference type="CGD" id="CAL0137763">
    <property type="gene designation" value="CAGL0G01826g"/>
</dbReference>
<dbReference type="VEuPathDB" id="FungiDB:B1J91_G01826g"/>
<dbReference type="VEuPathDB" id="FungiDB:CAGL0G01826g"/>
<dbReference type="eggNOG" id="KOG0397">
    <property type="taxonomic scope" value="Eukaryota"/>
</dbReference>
<dbReference type="HOGENOM" id="CLU_061015_3_0_1"/>
<dbReference type="InParanoid" id="Q6FTK4"/>
<dbReference type="Proteomes" id="UP000002428">
    <property type="component" value="Chromosome G"/>
</dbReference>
<dbReference type="GO" id="GO:0005737">
    <property type="term" value="C:cytoplasm"/>
    <property type="evidence" value="ECO:0007669"/>
    <property type="project" value="UniProtKB-SubCell"/>
</dbReference>
<dbReference type="GO" id="GO:0062040">
    <property type="term" value="C:fungal biofilm matrix"/>
    <property type="evidence" value="ECO:0000314"/>
    <property type="project" value="CGD"/>
</dbReference>
<dbReference type="GO" id="GO:0005634">
    <property type="term" value="C:nucleus"/>
    <property type="evidence" value="ECO:0007669"/>
    <property type="project" value="UniProtKB-SubCell"/>
</dbReference>
<dbReference type="GO" id="GO:1990904">
    <property type="term" value="C:ribonucleoprotein complex"/>
    <property type="evidence" value="ECO:0007669"/>
    <property type="project" value="UniProtKB-KW"/>
</dbReference>
<dbReference type="GO" id="GO:0005840">
    <property type="term" value="C:ribosome"/>
    <property type="evidence" value="ECO:0007669"/>
    <property type="project" value="UniProtKB-KW"/>
</dbReference>
<dbReference type="GO" id="GO:0019843">
    <property type="term" value="F:rRNA binding"/>
    <property type="evidence" value="ECO:0007669"/>
    <property type="project" value="UniProtKB-KW"/>
</dbReference>
<dbReference type="GO" id="GO:0003735">
    <property type="term" value="F:structural constituent of ribosome"/>
    <property type="evidence" value="ECO:0007669"/>
    <property type="project" value="InterPro"/>
</dbReference>
<dbReference type="GO" id="GO:0006412">
    <property type="term" value="P:translation"/>
    <property type="evidence" value="ECO:0007669"/>
    <property type="project" value="InterPro"/>
</dbReference>
<dbReference type="FunFam" id="3.30.1440.10:FF:000002">
    <property type="entry name" value="60S ribosomal protein L11"/>
    <property type="match status" value="1"/>
</dbReference>
<dbReference type="Gene3D" id="3.30.1440.10">
    <property type="match status" value="1"/>
</dbReference>
<dbReference type="InterPro" id="IPR002132">
    <property type="entry name" value="Ribosomal_uL5"/>
</dbReference>
<dbReference type="InterPro" id="IPR031309">
    <property type="entry name" value="Ribosomal_uL5_C"/>
</dbReference>
<dbReference type="InterPro" id="IPR020929">
    <property type="entry name" value="Ribosomal_uL5_CS"/>
</dbReference>
<dbReference type="InterPro" id="IPR022803">
    <property type="entry name" value="Ribosomal_uL5_dom_sf"/>
</dbReference>
<dbReference type="InterPro" id="IPR031310">
    <property type="entry name" value="Ribosomal_uL5_N"/>
</dbReference>
<dbReference type="NCBIfam" id="NF003258">
    <property type="entry name" value="PRK04219.1"/>
    <property type="match status" value="1"/>
</dbReference>
<dbReference type="PANTHER" id="PTHR11994">
    <property type="entry name" value="60S RIBOSOMAL PROTEIN L11-RELATED"/>
    <property type="match status" value="1"/>
</dbReference>
<dbReference type="Pfam" id="PF00281">
    <property type="entry name" value="Ribosomal_L5"/>
    <property type="match status" value="1"/>
</dbReference>
<dbReference type="Pfam" id="PF00673">
    <property type="entry name" value="Ribosomal_L5_C"/>
    <property type="match status" value="1"/>
</dbReference>
<dbReference type="PIRSF" id="PIRSF002161">
    <property type="entry name" value="Ribosomal_L5"/>
    <property type="match status" value="1"/>
</dbReference>
<dbReference type="SUPFAM" id="SSF55282">
    <property type="entry name" value="RL5-like"/>
    <property type="match status" value="1"/>
</dbReference>
<dbReference type="PROSITE" id="PS00358">
    <property type="entry name" value="RIBOSOMAL_L5"/>
    <property type="match status" value="1"/>
</dbReference>
<accession>Q6FTK4</accession>
<feature type="chain" id="PRO_0000125101" description="Large ribosomal subunit protein uL5">
    <location>
        <begin position="1"/>
        <end position="174"/>
    </location>
</feature>
<organism>
    <name type="scientific">Candida glabrata (strain ATCC 2001 / BCRC 20586 / JCM 3761 / NBRC 0622 / NRRL Y-65 / CBS 138)</name>
    <name type="common">Yeast</name>
    <name type="synonym">Nakaseomyces glabratus</name>
    <dbReference type="NCBI Taxonomy" id="284593"/>
    <lineage>
        <taxon>Eukaryota</taxon>
        <taxon>Fungi</taxon>
        <taxon>Dikarya</taxon>
        <taxon>Ascomycota</taxon>
        <taxon>Saccharomycotina</taxon>
        <taxon>Saccharomycetes</taxon>
        <taxon>Saccharomycetales</taxon>
        <taxon>Saccharomycetaceae</taxon>
        <taxon>Nakaseomyces</taxon>
    </lineage>
</organism>